<accession>A8GRW4</accession>
<evidence type="ECO:0000255" key="1">
    <source>
        <dbReference type="HAMAP-Rule" id="MF_00031"/>
    </source>
</evidence>
<reference key="1">
    <citation type="submission" date="2007-09" db="EMBL/GenBank/DDBJ databases">
        <title>Complete genome sequence of Rickettsia rickettsii.</title>
        <authorList>
            <person name="Madan A."/>
            <person name="Fahey J."/>
            <person name="Helton E."/>
            <person name="Ketteman M."/>
            <person name="Madan A."/>
            <person name="Rodrigues S."/>
            <person name="Sanchez A."/>
            <person name="Dasch G."/>
            <person name="Eremeeva M."/>
        </authorList>
    </citation>
    <scope>NUCLEOTIDE SEQUENCE [LARGE SCALE GENOMIC DNA]</scope>
    <source>
        <strain>Sheila Smith</strain>
    </source>
</reference>
<protein>
    <recommendedName>
        <fullName evidence="1">Holliday junction branch migration complex subunit RuvA</fullName>
    </recommendedName>
</protein>
<sequence length="204" mass="22260">MIGKLSGKVDSQGDDYVIIDVNGVGYLVYASGKTLGTLAEGEFYKLFIETHVREEHIHLYGFLTLEEKIFFNLLQSVNGIGTRMALFILSSLTPSDIQIAVNNEDKNIFKAISGVGAKLAERIVLELKGKVAKISSGSAIIKESLNIKNITPVASNEVIKALVNLGFSRFEAQNAVQGIITQNPEISIDELIKTALKNRNSNFS</sequence>
<comment type="function">
    <text evidence="1">The RuvA-RuvB-RuvC complex processes Holliday junction (HJ) DNA during genetic recombination and DNA repair, while the RuvA-RuvB complex plays an important role in the rescue of blocked DNA replication forks via replication fork reversal (RFR). RuvA specifically binds to HJ cruciform DNA, conferring on it an open structure. The RuvB hexamer acts as an ATP-dependent pump, pulling dsDNA into and through the RuvAB complex. HJ branch migration allows RuvC to scan DNA until it finds its consensus sequence, where it cleaves and resolves the cruciform DNA.</text>
</comment>
<comment type="subunit">
    <text evidence="1">Homotetramer. Forms an RuvA(8)-RuvB(12)-Holliday junction (HJ) complex. HJ DNA is sandwiched between 2 RuvA tetramers; dsDNA enters through RuvA and exits via RuvB. An RuvB hexamer assembles on each DNA strand where it exits the tetramer. Each RuvB hexamer is contacted by two RuvA subunits (via domain III) on 2 adjacent RuvB subunits; this complex drives branch migration. In the full resolvosome a probable DNA-RuvA(4)-RuvB(12)-RuvC(2) complex forms which resolves the HJ.</text>
</comment>
<comment type="subcellular location">
    <subcellularLocation>
        <location evidence="1">Cytoplasm</location>
    </subcellularLocation>
</comment>
<comment type="domain">
    <text evidence="1">Has three domains with a flexible linker between the domains II and III and assumes an 'L' shape. Domain III is highly mobile and contacts RuvB.</text>
</comment>
<comment type="similarity">
    <text evidence="1">Belongs to the RuvA family.</text>
</comment>
<gene>
    <name evidence="1" type="primary">ruvA</name>
    <name type="ordered locus">A1G_03010</name>
</gene>
<feature type="chain" id="PRO_1000002538" description="Holliday junction branch migration complex subunit RuvA">
    <location>
        <begin position="1"/>
        <end position="204"/>
    </location>
</feature>
<feature type="region of interest" description="Domain I" evidence="1">
    <location>
        <begin position="1"/>
        <end position="63"/>
    </location>
</feature>
<feature type="region of interest" description="Domain II" evidence="1">
    <location>
        <begin position="64"/>
        <end position="142"/>
    </location>
</feature>
<feature type="region of interest" description="Flexible linker" evidence="1">
    <location>
        <begin position="143"/>
        <end position="149"/>
    </location>
</feature>
<feature type="region of interest" description="Domain III" evidence="1">
    <location>
        <begin position="150"/>
        <end position="204"/>
    </location>
</feature>
<proteinExistence type="inferred from homology"/>
<keyword id="KW-0963">Cytoplasm</keyword>
<keyword id="KW-0227">DNA damage</keyword>
<keyword id="KW-0233">DNA recombination</keyword>
<keyword id="KW-0234">DNA repair</keyword>
<keyword id="KW-0238">DNA-binding</keyword>
<dbReference type="EMBL" id="CP000848">
    <property type="protein sequence ID" value="ABV76139.1"/>
    <property type="molecule type" value="Genomic_DNA"/>
</dbReference>
<dbReference type="RefSeq" id="WP_012150729.1">
    <property type="nucleotide sequence ID" value="NZ_CP121767.1"/>
</dbReference>
<dbReference type="SMR" id="A8GRW4"/>
<dbReference type="GeneID" id="79937286"/>
<dbReference type="KEGG" id="rri:A1G_03010"/>
<dbReference type="HOGENOM" id="CLU_087936_3_0_5"/>
<dbReference type="Proteomes" id="UP000006832">
    <property type="component" value="Chromosome"/>
</dbReference>
<dbReference type="GO" id="GO:0005737">
    <property type="term" value="C:cytoplasm"/>
    <property type="evidence" value="ECO:0007669"/>
    <property type="project" value="UniProtKB-SubCell"/>
</dbReference>
<dbReference type="GO" id="GO:0009379">
    <property type="term" value="C:Holliday junction helicase complex"/>
    <property type="evidence" value="ECO:0007669"/>
    <property type="project" value="InterPro"/>
</dbReference>
<dbReference type="GO" id="GO:0048476">
    <property type="term" value="C:Holliday junction resolvase complex"/>
    <property type="evidence" value="ECO:0007669"/>
    <property type="project" value="UniProtKB-UniRule"/>
</dbReference>
<dbReference type="GO" id="GO:0005524">
    <property type="term" value="F:ATP binding"/>
    <property type="evidence" value="ECO:0007669"/>
    <property type="project" value="InterPro"/>
</dbReference>
<dbReference type="GO" id="GO:0000400">
    <property type="term" value="F:four-way junction DNA binding"/>
    <property type="evidence" value="ECO:0007669"/>
    <property type="project" value="UniProtKB-UniRule"/>
</dbReference>
<dbReference type="GO" id="GO:0009378">
    <property type="term" value="F:four-way junction helicase activity"/>
    <property type="evidence" value="ECO:0007669"/>
    <property type="project" value="InterPro"/>
</dbReference>
<dbReference type="GO" id="GO:0006310">
    <property type="term" value="P:DNA recombination"/>
    <property type="evidence" value="ECO:0007669"/>
    <property type="project" value="UniProtKB-UniRule"/>
</dbReference>
<dbReference type="GO" id="GO:0006281">
    <property type="term" value="P:DNA repair"/>
    <property type="evidence" value="ECO:0007669"/>
    <property type="project" value="UniProtKB-UniRule"/>
</dbReference>
<dbReference type="CDD" id="cd14332">
    <property type="entry name" value="UBA_RuvA_C"/>
    <property type="match status" value="1"/>
</dbReference>
<dbReference type="Gene3D" id="1.10.150.20">
    <property type="entry name" value="5' to 3' exonuclease, C-terminal subdomain"/>
    <property type="match status" value="1"/>
</dbReference>
<dbReference type="Gene3D" id="1.10.8.10">
    <property type="entry name" value="DNA helicase RuvA subunit, C-terminal domain"/>
    <property type="match status" value="1"/>
</dbReference>
<dbReference type="Gene3D" id="2.40.50.140">
    <property type="entry name" value="Nucleic acid-binding proteins"/>
    <property type="match status" value="1"/>
</dbReference>
<dbReference type="HAMAP" id="MF_00031">
    <property type="entry name" value="DNA_HJ_migration_RuvA"/>
    <property type="match status" value="1"/>
</dbReference>
<dbReference type="InterPro" id="IPR013849">
    <property type="entry name" value="DNA_helicase_Holl-junc_RuvA_I"/>
</dbReference>
<dbReference type="InterPro" id="IPR012340">
    <property type="entry name" value="NA-bd_OB-fold"/>
</dbReference>
<dbReference type="InterPro" id="IPR000085">
    <property type="entry name" value="RuvA"/>
</dbReference>
<dbReference type="InterPro" id="IPR010994">
    <property type="entry name" value="RuvA_2-like"/>
</dbReference>
<dbReference type="InterPro" id="IPR011114">
    <property type="entry name" value="RuvA_C"/>
</dbReference>
<dbReference type="InterPro" id="IPR036267">
    <property type="entry name" value="RuvA_C_sf"/>
</dbReference>
<dbReference type="NCBIfam" id="TIGR00084">
    <property type="entry name" value="ruvA"/>
    <property type="match status" value="1"/>
</dbReference>
<dbReference type="Pfam" id="PF14520">
    <property type="entry name" value="HHH_5"/>
    <property type="match status" value="1"/>
</dbReference>
<dbReference type="Pfam" id="PF07499">
    <property type="entry name" value="RuvA_C"/>
    <property type="match status" value="1"/>
</dbReference>
<dbReference type="Pfam" id="PF01330">
    <property type="entry name" value="RuvA_N"/>
    <property type="match status" value="1"/>
</dbReference>
<dbReference type="SUPFAM" id="SSF46929">
    <property type="entry name" value="DNA helicase RuvA subunit, C-terminal domain"/>
    <property type="match status" value="1"/>
</dbReference>
<dbReference type="SUPFAM" id="SSF50249">
    <property type="entry name" value="Nucleic acid-binding proteins"/>
    <property type="match status" value="1"/>
</dbReference>
<dbReference type="SUPFAM" id="SSF47781">
    <property type="entry name" value="RuvA domain 2-like"/>
    <property type="match status" value="1"/>
</dbReference>
<name>RUVA_RICRS</name>
<organism>
    <name type="scientific">Rickettsia rickettsii (strain Sheila Smith)</name>
    <dbReference type="NCBI Taxonomy" id="392021"/>
    <lineage>
        <taxon>Bacteria</taxon>
        <taxon>Pseudomonadati</taxon>
        <taxon>Pseudomonadota</taxon>
        <taxon>Alphaproteobacteria</taxon>
        <taxon>Rickettsiales</taxon>
        <taxon>Rickettsiaceae</taxon>
        <taxon>Rickettsieae</taxon>
        <taxon>Rickettsia</taxon>
        <taxon>spotted fever group</taxon>
    </lineage>
</organism>